<proteinExistence type="inferred from homology"/>
<organism>
    <name type="scientific">Kluyveromyces lactis (strain ATCC 8585 / CBS 2359 / DSM 70799 / NBRC 1267 / NRRL Y-1140 / WM37)</name>
    <name type="common">Yeast</name>
    <name type="synonym">Candida sphaerica</name>
    <dbReference type="NCBI Taxonomy" id="284590"/>
    <lineage>
        <taxon>Eukaryota</taxon>
        <taxon>Fungi</taxon>
        <taxon>Dikarya</taxon>
        <taxon>Ascomycota</taxon>
        <taxon>Saccharomycotina</taxon>
        <taxon>Saccharomycetes</taxon>
        <taxon>Saccharomycetales</taxon>
        <taxon>Saccharomycetaceae</taxon>
        <taxon>Kluyveromyces</taxon>
    </lineage>
</organism>
<sequence>MSKHLAITKFRPANWLQKAGYAPQVFLFRNLESGQVLYSQFPTFSWKQIDTNFQRPNWENKKPSTRRDIWKCMAVVDLPDYDKSVKVYQNLCRLRYLRDVTFSKQAKDMRKKNESGHTWYSSQYRPTYSQEAVADLRECLLKLKDVQSSIKVHWEDEWRMGDKEKYWNPVLPELNHTTLERLGNVSREESAILKELGERAKEEFARVRQQESAAQNISL</sequence>
<keyword id="KW-0496">Mitochondrion</keyword>
<keyword id="KW-0539">Nucleus</keyword>
<keyword id="KW-1185">Reference proteome</keyword>
<keyword id="KW-0687">Ribonucleoprotein</keyword>
<keyword id="KW-0689">Ribosomal protein</keyword>
<keyword id="KW-0804">Transcription</keyword>
<keyword id="KW-0805">Transcription regulation</keyword>
<dbReference type="EMBL" id="CR382123">
    <property type="protein sequence ID" value="CAH01516.1"/>
    <property type="molecule type" value="Genomic_DNA"/>
</dbReference>
<dbReference type="RefSeq" id="XP_452665.1">
    <property type="nucleotide sequence ID" value="XM_452665.1"/>
</dbReference>
<dbReference type="SMR" id="Q6CTS4"/>
<dbReference type="FunCoup" id="Q6CTS4">
    <property type="interactions" value="175"/>
</dbReference>
<dbReference type="STRING" id="284590.Q6CTS4"/>
<dbReference type="PaxDb" id="284590-Q6CTS4"/>
<dbReference type="KEGG" id="kla:KLLA0_C10439g"/>
<dbReference type="eggNOG" id="ENOG502QSKX">
    <property type="taxonomic scope" value="Eukaryota"/>
</dbReference>
<dbReference type="HOGENOM" id="CLU_092898_0_0_1"/>
<dbReference type="InParanoid" id="Q6CTS4"/>
<dbReference type="OMA" id="YRPTYTQ"/>
<dbReference type="Proteomes" id="UP000000598">
    <property type="component" value="Chromosome C"/>
</dbReference>
<dbReference type="GO" id="GO:0005739">
    <property type="term" value="C:mitochondrion"/>
    <property type="evidence" value="ECO:0007669"/>
    <property type="project" value="UniProtKB-SubCell"/>
</dbReference>
<dbReference type="GO" id="GO:0005634">
    <property type="term" value="C:nucleus"/>
    <property type="evidence" value="ECO:0007669"/>
    <property type="project" value="UniProtKB-SubCell"/>
</dbReference>
<dbReference type="GO" id="GO:1990904">
    <property type="term" value="C:ribonucleoprotein complex"/>
    <property type="evidence" value="ECO:0007669"/>
    <property type="project" value="UniProtKB-KW"/>
</dbReference>
<dbReference type="GO" id="GO:0005840">
    <property type="term" value="C:ribosome"/>
    <property type="evidence" value="ECO:0007669"/>
    <property type="project" value="UniProtKB-KW"/>
</dbReference>
<dbReference type="GO" id="GO:0000150">
    <property type="term" value="F:DNA strand exchange activity"/>
    <property type="evidence" value="ECO:0007669"/>
    <property type="project" value="InterPro"/>
</dbReference>
<dbReference type="GO" id="GO:0003697">
    <property type="term" value="F:single-stranded DNA binding"/>
    <property type="evidence" value="ECO:0007669"/>
    <property type="project" value="InterPro"/>
</dbReference>
<dbReference type="GO" id="GO:0003735">
    <property type="term" value="F:structural constituent of ribosome"/>
    <property type="evidence" value="ECO:0007669"/>
    <property type="project" value="TreeGrafter"/>
</dbReference>
<dbReference type="GO" id="GO:0000002">
    <property type="term" value="P:mitochondrial genome maintenance"/>
    <property type="evidence" value="ECO:0007669"/>
    <property type="project" value="InterPro"/>
</dbReference>
<dbReference type="InterPro" id="IPR024629">
    <property type="entry name" value="Ribosomal_mL67"/>
</dbReference>
<dbReference type="PANTHER" id="PTHR28184:SF1">
    <property type="entry name" value="LARGE RIBOSOMAL SUBUNIT PROTEIN ML67"/>
    <property type="match status" value="1"/>
</dbReference>
<dbReference type="PANTHER" id="PTHR28184">
    <property type="entry name" value="MITOCHONDRIAL HOMOLOGOUS RECOMBINATION PROTEIN 1"/>
    <property type="match status" value="1"/>
</dbReference>
<dbReference type="Pfam" id="PF12829">
    <property type="entry name" value="Mhr1"/>
    <property type="match status" value="1"/>
</dbReference>
<comment type="function">
    <text evidence="1">Transcription factor involved in regulation of RNA polymerase II-dependent transcription. Also involved in regulation of mitochondrial DNA recombination, maintenance and repair, and generation of homoplasmic cells (By similarity).</text>
</comment>
<comment type="subcellular location">
    <subcellularLocation>
        <location evidence="1">Nucleus</location>
    </subcellularLocation>
    <subcellularLocation>
        <location evidence="1">Mitochondrion</location>
    </subcellularLocation>
</comment>
<comment type="similarity">
    <text evidence="2">Belongs to the mitochondrion-specific ribosomal protein mL67 family.</text>
</comment>
<gene>
    <name type="primary">MHR1</name>
    <name type="ordered locus">KLLA0C10439g</name>
</gene>
<protein>
    <recommendedName>
        <fullName evidence="2">Large ribosomal subunit protein mL67</fullName>
    </recommendedName>
    <alternativeName>
        <fullName>Mitochondrial homologous recombination protein 1</fullName>
    </alternativeName>
</protein>
<reference key="1">
    <citation type="journal article" date="2004" name="Nature">
        <title>Genome evolution in yeasts.</title>
        <authorList>
            <person name="Dujon B."/>
            <person name="Sherman D."/>
            <person name="Fischer G."/>
            <person name="Durrens P."/>
            <person name="Casaregola S."/>
            <person name="Lafontaine I."/>
            <person name="de Montigny J."/>
            <person name="Marck C."/>
            <person name="Neuveglise C."/>
            <person name="Talla E."/>
            <person name="Goffard N."/>
            <person name="Frangeul L."/>
            <person name="Aigle M."/>
            <person name="Anthouard V."/>
            <person name="Babour A."/>
            <person name="Barbe V."/>
            <person name="Barnay S."/>
            <person name="Blanchin S."/>
            <person name="Beckerich J.-M."/>
            <person name="Beyne E."/>
            <person name="Bleykasten C."/>
            <person name="Boisrame A."/>
            <person name="Boyer J."/>
            <person name="Cattolico L."/>
            <person name="Confanioleri F."/>
            <person name="de Daruvar A."/>
            <person name="Despons L."/>
            <person name="Fabre E."/>
            <person name="Fairhead C."/>
            <person name="Ferry-Dumazet H."/>
            <person name="Groppi A."/>
            <person name="Hantraye F."/>
            <person name="Hennequin C."/>
            <person name="Jauniaux N."/>
            <person name="Joyet P."/>
            <person name="Kachouri R."/>
            <person name="Kerrest A."/>
            <person name="Koszul R."/>
            <person name="Lemaire M."/>
            <person name="Lesur I."/>
            <person name="Ma L."/>
            <person name="Muller H."/>
            <person name="Nicaud J.-M."/>
            <person name="Nikolski M."/>
            <person name="Oztas S."/>
            <person name="Ozier-Kalogeropoulos O."/>
            <person name="Pellenz S."/>
            <person name="Potier S."/>
            <person name="Richard G.-F."/>
            <person name="Straub M.-L."/>
            <person name="Suleau A."/>
            <person name="Swennen D."/>
            <person name="Tekaia F."/>
            <person name="Wesolowski-Louvel M."/>
            <person name="Westhof E."/>
            <person name="Wirth B."/>
            <person name="Zeniou-Meyer M."/>
            <person name="Zivanovic Y."/>
            <person name="Bolotin-Fukuhara M."/>
            <person name="Thierry A."/>
            <person name="Bouchier C."/>
            <person name="Caudron B."/>
            <person name="Scarpelli C."/>
            <person name="Gaillardin C."/>
            <person name="Weissenbach J."/>
            <person name="Wincker P."/>
            <person name="Souciet J.-L."/>
        </authorList>
    </citation>
    <scope>NUCLEOTIDE SEQUENCE [LARGE SCALE GENOMIC DNA]</scope>
    <source>
        <strain>ATCC 8585 / CBS 2359 / DSM 70799 / NBRC 1267 / NRRL Y-1140 / WM37</strain>
    </source>
</reference>
<accession>Q6CTS4</accession>
<evidence type="ECO:0000250" key="1"/>
<evidence type="ECO:0000305" key="2"/>
<name>MHR1_KLULA</name>
<feature type="chain" id="PRO_0000255965" description="Large ribosomal subunit protein mL67">
    <location>
        <begin position="1"/>
        <end position="219"/>
    </location>
</feature>